<gene>
    <name evidence="1" type="primary">iscR</name>
    <name type="ordered locus">ECA3238</name>
</gene>
<organism>
    <name type="scientific">Pectobacterium atrosepticum (strain SCRI 1043 / ATCC BAA-672)</name>
    <name type="common">Erwinia carotovora subsp. atroseptica</name>
    <dbReference type="NCBI Taxonomy" id="218491"/>
    <lineage>
        <taxon>Bacteria</taxon>
        <taxon>Pseudomonadati</taxon>
        <taxon>Pseudomonadota</taxon>
        <taxon>Gammaproteobacteria</taxon>
        <taxon>Enterobacterales</taxon>
        <taxon>Pectobacteriaceae</taxon>
        <taxon>Pectobacterium</taxon>
    </lineage>
</organism>
<comment type="function">
    <text evidence="1">Regulates the transcription of several operons and genes involved in the biogenesis of Fe-S clusters and Fe-S-containing proteins.</text>
</comment>
<comment type="cofactor">
    <cofactor evidence="1">
        <name>[2Fe-2S] cluster</name>
        <dbReference type="ChEBI" id="CHEBI:190135"/>
    </cofactor>
    <text evidence="1">Binds 1 [2Fe-2S] cluster.</text>
</comment>
<sequence length="164" mass="18029">MRLTSKGRYAVTAMLDVALHSQEGPVPLADISERQGISLSYLEQLFSRLRKNGLVASVRGPGGGYLLGKNANEIAVGMVISAVDESVDATRCQGRESCQGGDRCLTHTLWRDLSDRITDFLNNITLDELVNNKEVLNVADRQDTDTRRTANGRIQETINVNLRA</sequence>
<dbReference type="EMBL" id="BX950851">
    <property type="protein sequence ID" value="CAG76136.1"/>
    <property type="molecule type" value="Genomic_DNA"/>
</dbReference>
<dbReference type="RefSeq" id="WP_011094757.1">
    <property type="nucleotide sequence ID" value="NC_004547.2"/>
</dbReference>
<dbReference type="SMR" id="Q6D258"/>
<dbReference type="STRING" id="218491.ECA3238"/>
<dbReference type="DNASU" id="2881621"/>
<dbReference type="GeneID" id="57209922"/>
<dbReference type="KEGG" id="eca:ECA3238"/>
<dbReference type="PATRIC" id="fig|218491.5.peg.3280"/>
<dbReference type="eggNOG" id="COG1959">
    <property type="taxonomic scope" value="Bacteria"/>
</dbReference>
<dbReference type="HOGENOM" id="CLU_107144_0_0_6"/>
<dbReference type="OrthoDB" id="9808360at2"/>
<dbReference type="Proteomes" id="UP000007966">
    <property type="component" value="Chromosome"/>
</dbReference>
<dbReference type="GO" id="GO:0005829">
    <property type="term" value="C:cytosol"/>
    <property type="evidence" value="ECO:0007669"/>
    <property type="project" value="TreeGrafter"/>
</dbReference>
<dbReference type="GO" id="GO:0051537">
    <property type="term" value="F:2 iron, 2 sulfur cluster binding"/>
    <property type="evidence" value="ECO:0007669"/>
    <property type="project" value="UniProtKB-KW"/>
</dbReference>
<dbReference type="GO" id="GO:0003700">
    <property type="term" value="F:DNA-binding transcription factor activity"/>
    <property type="evidence" value="ECO:0007669"/>
    <property type="project" value="UniProtKB-UniRule"/>
</dbReference>
<dbReference type="GO" id="GO:0003690">
    <property type="term" value="F:double-stranded DNA binding"/>
    <property type="evidence" value="ECO:0007669"/>
    <property type="project" value="UniProtKB-UniRule"/>
</dbReference>
<dbReference type="GO" id="GO:0005506">
    <property type="term" value="F:iron ion binding"/>
    <property type="evidence" value="ECO:0007669"/>
    <property type="project" value="UniProtKB-UniRule"/>
</dbReference>
<dbReference type="FunFam" id="1.10.10.10:FF:000026">
    <property type="entry name" value="HTH-type transcriptional regulator IscR"/>
    <property type="match status" value="1"/>
</dbReference>
<dbReference type="Gene3D" id="1.10.10.10">
    <property type="entry name" value="Winged helix-like DNA-binding domain superfamily/Winged helix DNA-binding domain"/>
    <property type="match status" value="1"/>
</dbReference>
<dbReference type="HAMAP" id="MF_01176">
    <property type="entry name" value="HTH_type_IscR"/>
    <property type="match status" value="1"/>
</dbReference>
<dbReference type="InterPro" id="IPR010242">
    <property type="entry name" value="TF_HTH_IscR"/>
</dbReference>
<dbReference type="InterPro" id="IPR030489">
    <property type="entry name" value="TR_Rrf2-type_CS"/>
</dbReference>
<dbReference type="InterPro" id="IPR000944">
    <property type="entry name" value="Tscrpt_reg_Rrf2"/>
</dbReference>
<dbReference type="InterPro" id="IPR036388">
    <property type="entry name" value="WH-like_DNA-bd_sf"/>
</dbReference>
<dbReference type="InterPro" id="IPR036390">
    <property type="entry name" value="WH_DNA-bd_sf"/>
</dbReference>
<dbReference type="NCBIfam" id="TIGR02010">
    <property type="entry name" value="IscR"/>
    <property type="match status" value="1"/>
</dbReference>
<dbReference type="NCBIfam" id="NF008110">
    <property type="entry name" value="PRK10857.1"/>
    <property type="match status" value="1"/>
</dbReference>
<dbReference type="NCBIfam" id="TIGR00738">
    <property type="entry name" value="rrf2_super"/>
    <property type="match status" value="1"/>
</dbReference>
<dbReference type="PANTHER" id="PTHR33221:SF5">
    <property type="entry name" value="HTH-TYPE TRANSCRIPTIONAL REGULATOR ISCR"/>
    <property type="match status" value="1"/>
</dbReference>
<dbReference type="PANTHER" id="PTHR33221">
    <property type="entry name" value="WINGED HELIX-TURN-HELIX TRANSCRIPTIONAL REGULATOR, RRF2 FAMILY"/>
    <property type="match status" value="1"/>
</dbReference>
<dbReference type="Pfam" id="PF02082">
    <property type="entry name" value="Rrf2"/>
    <property type="match status" value="1"/>
</dbReference>
<dbReference type="SUPFAM" id="SSF46785">
    <property type="entry name" value="Winged helix' DNA-binding domain"/>
    <property type="match status" value="1"/>
</dbReference>
<dbReference type="PROSITE" id="PS01332">
    <property type="entry name" value="HTH_RRF2_1"/>
    <property type="match status" value="1"/>
</dbReference>
<dbReference type="PROSITE" id="PS51197">
    <property type="entry name" value="HTH_RRF2_2"/>
    <property type="match status" value="1"/>
</dbReference>
<protein>
    <recommendedName>
        <fullName evidence="1">HTH-type transcriptional regulator IscR</fullName>
    </recommendedName>
</protein>
<feature type="chain" id="PRO_0000268917" description="HTH-type transcriptional regulator IscR">
    <location>
        <begin position="1"/>
        <end position="164"/>
    </location>
</feature>
<feature type="domain" description="HTH rrf2-type" evidence="1">
    <location>
        <begin position="2"/>
        <end position="131"/>
    </location>
</feature>
<feature type="DNA-binding region" description="H-T-H motif" evidence="1">
    <location>
        <begin position="28"/>
        <end position="51"/>
    </location>
</feature>
<feature type="binding site" evidence="1">
    <location>
        <position position="92"/>
    </location>
    <ligand>
        <name>[2Fe-2S] cluster</name>
        <dbReference type="ChEBI" id="CHEBI:190135"/>
    </ligand>
</feature>
<feature type="binding site" evidence="1">
    <location>
        <position position="98"/>
    </location>
    <ligand>
        <name>[2Fe-2S] cluster</name>
        <dbReference type="ChEBI" id="CHEBI:190135"/>
    </ligand>
</feature>
<feature type="binding site" evidence="1">
    <location>
        <position position="104"/>
    </location>
    <ligand>
        <name>[2Fe-2S] cluster</name>
        <dbReference type="ChEBI" id="CHEBI:190135"/>
    </ligand>
</feature>
<proteinExistence type="inferred from homology"/>
<reference key="1">
    <citation type="journal article" date="2004" name="Proc. Natl. Acad. Sci. U.S.A.">
        <title>Genome sequence of the enterobacterial phytopathogen Erwinia carotovora subsp. atroseptica and characterization of virulence factors.</title>
        <authorList>
            <person name="Bell K.S."/>
            <person name="Sebaihia M."/>
            <person name="Pritchard L."/>
            <person name="Holden M.T.G."/>
            <person name="Hyman L.J."/>
            <person name="Holeva M.C."/>
            <person name="Thomson N.R."/>
            <person name="Bentley S.D."/>
            <person name="Churcher L.J.C."/>
            <person name="Mungall K."/>
            <person name="Atkin R."/>
            <person name="Bason N."/>
            <person name="Brooks K."/>
            <person name="Chillingworth T."/>
            <person name="Clark K."/>
            <person name="Doggett J."/>
            <person name="Fraser A."/>
            <person name="Hance Z."/>
            <person name="Hauser H."/>
            <person name="Jagels K."/>
            <person name="Moule S."/>
            <person name="Norbertczak H."/>
            <person name="Ormond D."/>
            <person name="Price C."/>
            <person name="Quail M.A."/>
            <person name="Sanders M."/>
            <person name="Walker D."/>
            <person name="Whitehead S."/>
            <person name="Salmond G.P.C."/>
            <person name="Birch P.R.J."/>
            <person name="Parkhill J."/>
            <person name="Toth I.K."/>
        </authorList>
    </citation>
    <scope>NUCLEOTIDE SEQUENCE [LARGE SCALE GENOMIC DNA]</scope>
    <source>
        <strain>SCRI 1043 / ATCC BAA-672</strain>
    </source>
</reference>
<evidence type="ECO:0000255" key="1">
    <source>
        <dbReference type="HAMAP-Rule" id="MF_01176"/>
    </source>
</evidence>
<keyword id="KW-0001">2Fe-2S</keyword>
<keyword id="KW-0010">Activator</keyword>
<keyword id="KW-0238">DNA-binding</keyword>
<keyword id="KW-0408">Iron</keyword>
<keyword id="KW-0411">Iron-sulfur</keyword>
<keyword id="KW-0479">Metal-binding</keyword>
<keyword id="KW-1185">Reference proteome</keyword>
<keyword id="KW-0678">Repressor</keyword>
<keyword id="KW-0804">Transcription</keyword>
<keyword id="KW-0805">Transcription regulation</keyword>
<accession>Q6D258</accession>
<name>ISCR_PECAS</name>